<organism>
    <name type="scientific">Schizosaccharomyces pombe (strain 972 / ATCC 24843)</name>
    <name type="common">Fission yeast</name>
    <dbReference type="NCBI Taxonomy" id="284812"/>
    <lineage>
        <taxon>Eukaryota</taxon>
        <taxon>Fungi</taxon>
        <taxon>Dikarya</taxon>
        <taxon>Ascomycota</taxon>
        <taxon>Taphrinomycotina</taxon>
        <taxon>Schizosaccharomycetes</taxon>
        <taxon>Schizosaccharomycetales</taxon>
        <taxon>Schizosaccharomycetaceae</taxon>
        <taxon>Schizosaccharomyces</taxon>
    </lineage>
</organism>
<keyword id="KW-0963">Cytoplasm</keyword>
<keyword id="KW-0469">Meiosis</keyword>
<keyword id="KW-0597">Phosphoprotein</keyword>
<keyword id="KW-1185">Reference proteome</keyword>
<keyword id="KW-0677">Repeat</keyword>
<keyword id="KW-0749">Sporulation</keyword>
<keyword id="KW-0853">WD repeat</keyword>
<name>MIP1_SCHPO</name>
<feature type="chain" id="PRO_0000051078" description="Target of rapamycin complex 1 subunit mip1">
    <location>
        <begin position="1"/>
        <end position="1313"/>
    </location>
</feature>
<feature type="repeat" description="WD 1">
    <location>
        <begin position="986"/>
        <end position="1029"/>
    </location>
</feature>
<feature type="repeat" description="WD 2">
    <location>
        <begin position="1033"/>
        <end position="1074"/>
    </location>
</feature>
<feature type="repeat" description="WD 3">
    <location>
        <begin position="1087"/>
        <end position="1126"/>
    </location>
</feature>
<feature type="repeat" description="WD 4">
    <location>
        <begin position="1130"/>
        <end position="1170"/>
    </location>
</feature>
<feature type="repeat" description="WD 5">
    <location>
        <begin position="1176"/>
        <end position="1216"/>
    </location>
</feature>
<feature type="repeat" description="WD 6">
    <location>
        <begin position="1219"/>
        <end position="1259"/>
    </location>
</feature>
<feature type="repeat" description="WD 7">
    <location>
        <begin position="1268"/>
        <end position="1308"/>
    </location>
</feature>
<feature type="region of interest" description="Disordered" evidence="1">
    <location>
        <begin position="1"/>
        <end position="35"/>
    </location>
</feature>
<feature type="modified residue" description="Phosphoserine" evidence="5">
    <location>
        <position position="834"/>
    </location>
</feature>
<feature type="modified residue" description="Phosphoserine" evidence="6 9">
    <location>
        <position position="837"/>
    </location>
</feature>
<feature type="modified residue" description="Phosphoserine" evidence="5">
    <location>
        <position position="882"/>
    </location>
</feature>
<accession>P87141</accession>
<reference key="1">
    <citation type="journal article" date="2000" name="Mol. Cell. Biol.">
        <title>Novel WD-repeat protein Mip1p facilitates function of the meiotic regulator Mei2p in fission yeast.</title>
        <authorList>
            <person name="Shinozaki-Yabana S."/>
            <person name="Watanabe Y."/>
            <person name="Yamamoto M."/>
        </authorList>
    </citation>
    <scope>NUCLEOTIDE SEQUENCE [GENOMIC DNA]</scope>
    <scope>FUNCTION</scope>
    <scope>SUBCELLULAR LOCATION</scope>
</reference>
<reference key="2">
    <citation type="journal article" date="2002" name="Nature">
        <title>The genome sequence of Schizosaccharomyces pombe.</title>
        <authorList>
            <person name="Wood V."/>
            <person name="Gwilliam R."/>
            <person name="Rajandream M.A."/>
            <person name="Lyne M.H."/>
            <person name="Lyne R."/>
            <person name="Stewart A."/>
            <person name="Sgouros J.G."/>
            <person name="Peat N."/>
            <person name="Hayles J."/>
            <person name="Baker S.G."/>
            <person name="Basham D."/>
            <person name="Bowman S."/>
            <person name="Brooks K."/>
            <person name="Brown D."/>
            <person name="Brown S."/>
            <person name="Chillingworth T."/>
            <person name="Churcher C.M."/>
            <person name="Collins M."/>
            <person name="Connor R."/>
            <person name="Cronin A."/>
            <person name="Davis P."/>
            <person name="Feltwell T."/>
            <person name="Fraser A."/>
            <person name="Gentles S."/>
            <person name="Goble A."/>
            <person name="Hamlin N."/>
            <person name="Harris D.E."/>
            <person name="Hidalgo J."/>
            <person name="Hodgson G."/>
            <person name="Holroyd S."/>
            <person name="Hornsby T."/>
            <person name="Howarth S."/>
            <person name="Huckle E.J."/>
            <person name="Hunt S."/>
            <person name="Jagels K."/>
            <person name="James K.D."/>
            <person name="Jones L."/>
            <person name="Jones M."/>
            <person name="Leather S."/>
            <person name="McDonald S."/>
            <person name="McLean J."/>
            <person name="Mooney P."/>
            <person name="Moule S."/>
            <person name="Mungall K.L."/>
            <person name="Murphy L.D."/>
            <person name="Niblett D."/>
            <person name="Odell C."/>
            <person name="Oliver K."/>
            <person name="O'Neil S."/>
            <person name="Pearson D."/>
            <person name="Quail M.A."/>
            <person name="Rabbinowitsch E."/>
            <person name="Rutherford K.M."/>
            <person name="Rutter S."/>
            <person name="Saunders D."/>
            <person name="Seeger K."/>
            <person name="Sharp S."/>
            <person name="Skelton J."/>
            <person name="Simmonds M.N."/>
            <person name="Squares R."/>
            <person name="Squares S."/>
            <person name="Stevens K."/>
            <person name="Taylor K."/>
            <person name="Taylor R.G."/>
            <person name="Tivey A."/>
            <person name="Walsh S.V."/>
            <person name="Warren T."/>
            <person name="Whitehead S."/>
            <person name="Woodward J.R."/>
            <person name="Volckaert G."/>
            <person name="Aert R."/>
            <person name="Robben J."/>
            <person name="Grymonprez B."/>
            <person name="Weltjens I."/>
            <person name="Vanstreels E."/>
            <person name="Rieger M."/>
            <person name="Schaefer M."/>
            <person name="Mueller-Auer S."/>
            <person name="Gabel C."/>
            <person name="Fuchs M."/>
            <person name="Duesterhoeft A."/>
            <person name="Fritzc C."/>
            <person name="Holzer E."/>
            <person name="Moestl D."/>
            <person name="Hilbert H."/>
            <person name="Borzym K."/>
            <person name="Langer I."/>
            <person name="Beck A."/>
            <person name="Lehrach H."/>
            <person name="Reinhardt R."/>
            <person name="Pohl T.M."/>
            <person name="Eger P."/>
            <person name="Zimmermann W."/>
            <person name="Wedler H."/>
            <person name="Wambutt R."/>
            <person name="Purnelle B."/>
            <person name="Goffeau A."/>
            <person name="Cadieu E."/>
            <person name="Dreano S."/>
            <person name="Gloux S."/>
            <person name="Lelaure V."/>
            <person name="Mottier S."/>
            <person name="Galibert F."/>
            <person name="Aves S.J."/>
            <person name="Xiang Z."/>
            <person name="Hunt C."/>
            <person name="Moore K."/>
            <person name="Hurst S.M."/>
            <person name="Lucas M."/>
            <person name="Rochet M."/>
            <person name="Gaillardin C."/>
            <person name="Tallada V.A."/>
            <person name="Garzon A."/>
            <person name="Thode G."/>
            <person name="Daga R.R."/>
            <person name="Cruzado L."/>
            <person name="Jimenez J."/>
            <person name="Sanchez M."/>
            <person name="del Rey F."/>
            <person name="Benito J."/>
            <person name="Dominguez A."/>
            <person name="Revuelta J.L."/>
            <person name="Moreno S."/>
            <person name="Armstrong J."/>
            <person name="Forsburg S.L."/>
            <person name="Cerutti L."/>
            <person name="Lowe T."/>
            <person name="McCombie W.R."/>
            <person name="Paulsen I."/>
            <person name="Potashkin J."/>
            <person name="Shpakovski G.V."/>
            <person name="Ussery D."/>
            <person name="Barrell B.G."/>
            <person name="Nurse P."/>
        </authorList>
    </citation>
    <scope>NUCLEOTIDE SEQUENCE [LARGE SCALE GENOMIC DNA]</scope>
    <source>
        <strain>972 / ATCC 24843</strain>
    </source>
</reference>
<reference key="3">
    <citation type="journal article" date="2006" name="J. Cell Sci.">
        <title>Fission yeast Tor2 promotes cell growth and represses cell differentiation.</title>
        <authorList>
            <person name="Alvarez B."/>
            <person name="Moreno S."/>
        </authorList>
    </citation>
    <scope>FUNCTION</scope>
    <scope>INTERACTION WITH TOR2</scope>
</reference>
<reference key="4">
    <citation type="journal article" date="2007" name="Genes Cells">
        <title>Rapamycin sensitivity of the Schizosaccharomyces pombe tor2 mutant and organization of two highly phosphorylated TOR complexes by specific and common subunits.</title>
        <authorList>
            <person name="Hayashi T."/>
            <person name="Hatanaka M."/>
            <person name="Nagao K."/>
            <person name="Nakaseko Y."/>
            <person name="Kanoh J."/>
            <person name="Kokubu A."/>
            <person name="Ebe M."/>
            <person name="Yanagida M."/>
        </authorList>
    </citation>
    <scope>IDENTIFICATION IN THE TORC1 COMPLEX</scope>
    <scope>PHOSPHORYLATION AT SER-834 AND SER-882</scope>
    <scope>IDENTIFICATION BY MASS SPECTROMETRY</scope>
</reference>
<reference key="5">
    <citation type="journal article" date="2007" name="Mol. Cell. Biol.">
        <title>Loss of the TOR kinase Tor2 mimics nitrogen starvation and activates the sexual development pathway in fission yeast.</title>
        <authorList>
            <person name="Matsuo T."/>
            <person name="Otsubo Y."/>
            <person name="Urano J."/>
            <person name="Tamanoi F."/>
            <person name="Yamamoto M."/>
        </authorList>
    </citation>
    <scope>FUNCTION</scope>
    <scope>INTERACTION WITH TOR2</scope>
</reference>
<reference key="6">
    <citation type="journal article" date="2008" name="J. Proteome Res.">
        <title>Phosphoproteome analysis of fission yeast.</title>
        <authorList>
            <person name="Wilson-Grady J.T."/>
            <person name="Villen J."/>
            <person name="Gygi S.P."/>
        </authorList>
    </citation>
    <scope>PHOSPHORYLATION [LARGE SCALE ANALYSIS] AT SER-837</scope>
    <scope>IDENTIFICATION BY MASS SPECTROMETRY</scope>
</reference>
<proteinExistence type="evidence at protein level"/>
<sequence>MNDRISEVSGSSRARRSVLSYGTTETGSDRYTENSNIATENGVDTASSMIDGIQSGFPQPRHGFEEEYNNAEYINMLEQVFYMYYTDKRHRGVISKKNAEPTETIHDWRMRERLKTVSAALLVCLNIGVDPPDVIKPNPAAKYECWIDPFSLPASKALEAIGKNLQQQYETLSMRTRYRHYLDPAIEEVKKLCIGQRRNAKEERILFHYNGHGVPMPTASGEIWVFNKNYTQYIPVSLYDLQSWLGAPCIYVYDCSAAGNIIVNFNRFAEQRDKEALRIAKQNPNVLAMPSHTSCIQLAACGPKETLPMNPDLPADLFTSCLTSPIEISVRWYVLQNPFPNKLNLNMLLKIPGRLQDRRTPLGELNWIFTAITDTIAWNVFPKHLFRRLFRQDLMVAALFRNFLLAERIMLVHSCHPQSSPELPPTHDHPMWNSWDLAIDNCLSQLPDMLDAESKGIAYEYKHSTFFSEQLTAFEVWLSQGLISRKPPDQLPLVLQVLLSQVHRLRALILLSKFLDLGVWAVDLALSIGIFPYVLKLLQSPAIELKPVLVFIWARILAVDDSCQADLLKDNGYGYFVQILNPNSSIFPSSNISEHRAMCAFILSVFCRGFPQGQLACLNPQVLSHCLSHLNSPDSLLRQWACLCISQLWENYSEAKWSGTRDNAHVKLAEIIVDSVPEVRASVLTAFTTFLGFPEKTEEVVAVETYIAIAALAALSDASPLVRHELVIFLSHFVVNYKKQLMVVAYESSLADILEKKNHNSISASTIYETVWQAVLVLAADPSIEISLAAEAIINYVYQSMLNSELRESFLAFLLQHLPALHKASLSKDTDTNSVTSDPKPHPFVPSVSENKILNRSFSLTRSLKGLALSLAGSDRASELLSLNGENKPAESNLNHLTSAKVPGPPAFNELEYQSELDMPLTSYLFDWSRKYFTEPQMRPNEDDEPGSICYNQRLWRRNRNEKLIYRTRPLAEYSTNGRWNQQLMTFNNTIAPRKLMFHQFEDQLITLGDKDIIQVWDWRRNRCLNSFKTSASATTNVTDMQLLNEDDVALLMTGSSDGTIKLYRDYENEKVELVTSWNSLSDLVFGDRNASLLMSWQQNCGHLLVAGDVRVIRIWDASKEICYANLPVRSSNSITSLTSDLVGCNIIVAGFSDGVLRVYDKRLPARDSLTDVWKEHSSEIVNVEMQSSGMRELISASSDGEVKLWDIRMNHSLQTFSTDNSGLTSLTVHSHAPVYATGSSNQSIKIWDTLGQNINTFRENPRFLNQPKPSSLMCLKFHPHHLLLACGDNTDSRVNLYSCTKNEIHTDSPNEF</sequence>
<dbReference type="EMBL" id="AB032552">
    <property type="protein sequence ID" value="BAA84585.1"/>
    <property type="molecule type" value="Genomic_DNA"/>
</dbReference>
<dbReference type="EMBL" id="CU329670">
    <property type="protein sequence ID" value="CAB08769.1"/>
    <property type="molecule type" value="Genomic_DNA"/>
</dbReference>
<dbReference type="PIR" id="T38943">
    <property type="entry name" value="T38943"/>
</dbReference>
<dbReference type="RefSeq" id="NP_593370.1">
    <property type="nucleotide sequence ID" value="NM_001018802.2"/>
</dbReference>
<dbReference type="SMR" id="P87141"/>
<dbReference type="BioGRID" id="278868">
    <property type="interactions" value="11"/>
</dbReference>
<dbReference type="FunCoup" id="P87141">
    <property type="interactions" value="381"/>
</dbReference>
<dbReference type="IntAct" id="P87141">
    <property type="interactions" value="1"/>
</dbReference>
<dbReference type="STRING" id="284812.P87141"/>
<dbReference type="iPTMnet" id="P87141"/>
<dbReference type="PaxDb" id="4896-SPAC57A7.11.1"/>
<dbReference type="EnsemblFungi" id="SPAC57A7.11.1">
    <property type="protein sequence ID" value="SPAC57A7.11.1:pep"/>
    <property type="gene ID" value="SPAC57A7.11"/>
</dbReference>
<dbReference type="GeneID" id="2542404"/>
<dbReference type="KEGG" id="spo:2542404"/>
<dbReference type="PomBase" id="SPAC57A7.11">
    <property type="gene designation" value="mip1"/>
</dbReference>
<dbReference type="VEuPathDB" id="FungiDB:SPAC57A7.11"/>
<dbReference type="eggNOG" id="KOG1517">
    <property type="taxonomic scope" value="Eukaryota"/>
</dbReference>
<dbReference type="HOGENOM" id="CLU_001136_0_2_1"/>
<dbReference type="InParanoid" id="P87141"/>
<dbReference type="OMA" id="TEVCTND"/>
<dbReference type="PhylomeDB" id="P87141"/>
<dbReference type="Reactome" id="R-SPO-3371571">
    <property type="pathway name" value="HSF1-dependent transactivation"/>
</dbReference>
<dbReference type="Reactome" id="R-SPO-9639288">
    <property type="pathway name" value="Amino acids regulate mTORC1"/>
</dbReference>
<dbReference type="PRO" id="PR:P87141"/>
<dbReference type="Proteomes" id="UP000002485">
    <property type="component" value="Chromosome I"/>
</dbReference>
<dbReference type="GO" id="GO:0005737">
    <property type="term" value="C:cytoplasm"/>
    <property type="evidence" value="ECO:0000314"/>
    <property type="project" value="PomBase"/>
</dbReference>
<dbReference type="GO" id="GO:0000329">
    <property type="term" value="C:fungal-type vacuole membrane"/>
    <property type="evidence" value="ECO:0000314"/>
    <property type="project" value="PomBase"/>
</dbReference>
<dbReference type="GO" id="GO:0030874">
    <property type="term" value="C:nucleolar chromatin"/>
    <property type="evidence" value="ECO:0000314"/>
    <property type="project" value="PomBase"/>
</dbReference>
<dbReference type="GO" id="GO:0031931">
    <property type="term" value="C:TORC1 complex"/>
    <property type="evidence" value="ECO:0000314"/>
    <property type="project" value="PomBase"/>
</dbReference>
<dbReference type="GO" id="GO:0030674">
    <property type="term" value="F:protein-macromolecule adaptor activity"/>
    <property type="evidence" value="ECO:0000318"/>
    <property type="project" value="GO_Central"/>
</dbReference>
<dbReference type="GO" id="GO:0071230">
    <property type="term" value="P:cellular response to amino acid stimulus"/>
    <property type="evidence" value="ECO:0000318"/>
    <property type="project" value="GO_Central"/>
</dbReference>
<dbReference type="GO" id="GO:0009267">
    <property type="term" value="P:cellular response to starvation"/>
    <property type="evidence" value="ECO:0000318"/>
    <property type="project" value="GO_Central"/>
</dbReference>
<dbReference type="GO" id="GO:0051321">
    <property type="term" value="P:meiotic cell cycle"/>
    <property type="evidence" value="ECO:0007669"/>
    <property type="project" value="UniProtKB-KW"/>
</dbReference>
<dbReference type="GO" id="GO:0030307">
    <property type="term" value="P:positive regulation of cell growth"/>
    <property type="evidence" value="ECO:0000318"/>
    <property type="project" value="GO_Central"/>
</dbReference>
<dbReference type="GO" id="GO:0031139">
    <property type="term" value="P:positive regulation of conjugation with cellular fusion"/>
    <property type="evidence" value="ECO:0000315"/>
    <property type="project" value="PomBase"/>
</dbReference>
<dbReference type="GO" id="GO:0010506">
    <property type="term" value="P:regulation of autophagy"/>
    <property type="evidence" value="ECO:0000318"/>
    <property type="project" value="GO_Central"/>
</dbReference>
<dbReference type="GO" id="GO:0030435">
    <property type="term" value="P:sporulation resulting in formation of a cellular spore"/>
    <property type="evidence" value="ECO:0007669"/>
    <property type="project" value="UniProtKB-KW"/>
</dbReference>
<dbReference type="GO" id="GO:0031929">
    <property type="term" value="P:TOR signaling"/>
    <property type="evidence" value="ECO:0000318"/>
    <property type="project" value="GO_Central"/>
</dbReference>
<dbReference type="GO" id="GO:0038202">
    <property type="term" value="P:TORC1 signaling"/>
    <property type="evidence" value="ECO:0000269"/>
    <property type="project" value="PomBase"/>
</dbReference>
<dbReference type="Gene3D" id="1.25.10.10">
    <property type="entry name" value="Leucine-rich Repeat Variant"/>
    <property type="match status" value="1"/>
</dbReference>
<dbReference type="Gene3D" id="2.130.10.10">
    <property type="entry name" value="YVTN repeat-like/Quinoprotein amine dehydrogenase"/>
    <property type="match status" value="2"/>
</dbReference>
<dbReference type="InterPro" id="IPR011989">
    <property type="entry name" value="ARM-like"/>
</dbReference>
<dbReference type="InterPro" id="IPR016024">
    <property type="entry name" value="ARM-type_fold"/>
</dbReference>
<dbReference type="InterPro" id="IPR004083">
    <property type="entry name" value="Raptor"/>
</dbReference>
<dbReference type="InterPro" id="IPR029347">
    <property type="entry name" value="Raptor_N"/>
</dbReference>
<dbReference type="InterPro" id="IPR015943">
    <property type="entry name" value="WD40/YVTN_repeat-like_dom_sf"/>
</dbReference>
<dbReference type="InterPro" id="IPR019775">
    <property type="entry name" value="WD40_repeat_CS"/>
</dbReference>
<dbReference type="InterPro" id="IPR036322">
    <property type="entry name" value="WD40_repeat_dom_sf"/>
</dbReference>
<dbReference type="InterPro" id="IPR001680">
    <property type="entry name" value="WD40_rpt"/>
</dbReference>
<dbReference type="PANTHER" id="PTHR12848">
    <property type="entry name" value="REGULATORY-ASSOCIATED PROTEIN OF MTOR"/>
    <property type="match status" value="1"/>
</dbReference>
<dbReference type="PANTHER" id="PTHR12848:SF16">
    <property type="entry name" value="REGULATORY-ASSOCIATED PROTEIN OF MTOR"/>
    <property type="match status" value="1"/>
</dbReference>
<dbReference type="Pfam" id="PF14538">
    <property type="entry name" value="Raptor_N"/>
    <property type="match status" value="1"/>
</dbReference>
<dbReference type="Pfam" id="PF00400">
    <property type="entry name" value="WD40"/>
    <property type="match status" value="2"/>
</dbReference>
<dbReference type="PRINTS" id="PR01547">
    <property type="entry name" value="YEAST176DUF"/>
</dbReference>
<dbReference type="SMART" id="SM01302">
    <property type="entry name" value="Raptor_N"/>
    <property type="match status" value="1"/>
</dbReference>
<dbReference type="SMART" id="SM00320">
    <property type="entry name" value="WD40"/>
    <property type="match status" value="6"/>
</dbReference>
<dbReference type="SUPFAM" id="SSF48371">
    <property type="entry name" value="ARM repeat"/>
    <property type="match status" value="1"/>
</dbReference>
<dbReference type="SUPFAM" id="SSF50978">
    <property type="entry name" value="WD40 repeat-like"/>
    <property type="match status" value="1"/>
</dbReference>
<dbReference type="PROSITE" id="PS00678">
    <property type="entry name" value="WD_REPEATS_1"/>
    <property type="match status" value="1"/>
</dbReference>
<dbReference type="PROSITE" id="PS50082">
    <property type="entry name" value="WD_REPEATS_2"/>
    <property type="match status" value="2"/>
</dbReference>
<dbReference type="PROSITE" id="PS50294">
    <property type="entry name" value="WD_REPEATS_REGION"/>
    <property type="match status" value="1"/>
</dbReference>
<protein>
    <recommendedName>
        <fullName evidence="9">Target of rapamycin complex 1 subunit mip1</fullName>
        <shortName>TORC1 subunit mip1</shortName>
    </recommendedName>
</protein>
<evidence type="ECO:0000256" key="1">
    <source>
        <dbReference type="SAM" id="MobiDB-lite"/>
    </source>
</evidence>
<evidence type="ECO:0000269" key="2">
    <source>
    </source>
</evidence>
<evidence type="ECO:0000269" key="3">
    <source>
    </source>
</evidence>
<evidence type="ECO:0000269" key="4">
    <source>
    </source>
</evidence>
<evidence type="ECO:0000269" key="5">
    <source>
    </source>
</evidence>
<evidence type="ECO:0000269" key="6">
    <source>
    </source>
</evidence>
<evidence type="ECO:0000303" key="7">
    <source>
    </source>
</evidence>
<evidence type="ECO:0000305" key="8"/>
<evidence type="ECO:0000305" key="9">
    <source>
    </source>
</evidence>
<evidence type="ECO:0000312" key="10">
    <source>
        <dbReference type="PomBase" id="SPAC57A7.11"/>
    </source>
</evidence>
<comment type="function">
    <text evidence="2 3 4">Component of TORC1, which regulates multiple cellular processes to control cell growth in response to environmental signals. Tor2 is essential for growth. Nutrient limitation and environmental stress signals cause inactivation of TORC1. Active TORC1 positively controls cell growth and ribosome biogenesis by regulating ribosomal protein gene expression. TORC1 negatively controls G1 cell-cycle arrest, sexual development and amino acid uptake. Represses mating, meiosis and sporulation efficiency by interfering with the functions of the transcription factor ste11 and the meiosis-promoting RNA-binding protein mei2.</text>
</comment>
<comment type="subunit">
    <text evidence="3 4 5">The target of rapamycin complex 1 (TORC1) is composed of at least mip1, pop3/wat1, tco89, toc1 and tor2.</text>
</comment>
<comment type="subcellular location">
    <subcellularLocation>
        <location evidence="2 5">Cytoplasm</location>
    </subcellularLocation>
</comment>
<comment type="similarity">
    <text evidence="8">Belongs to the WD repeat RAPTOR family.</text>
</comment>
<gene>
    <name evidence="7" type="primary">mip1</name>
    <name evidence="10" type="ORF">SPAC57A7.11</name>
</gene>